<dbReference type="EMBL" id="CP000542">
    <property type="protein sequence ID" value="ABM60259.1"/>
    <property type="molecule type" value="Genomic_DNA"/>
</dbReference>
<dbReference type="RefSeq" id="WP_011812243.1">
    <property type="nucleotide sequence ID" value="NC_008786.1"/>
</dbReference>
<dbReference type="SMR" id="A1WRK2"/>
<dbReference type="STRING" id="391735.Veis_4561"/>
<dbReference type="GeneID" id="76462854"/>
<dbReference type="KEGG" id="vei:Veis_4561"/>
<dbReference type="eggNOG" id="COG2001">
    <property type="taxonomic scope" value="Bacteria"/>
</dbReference>
<dbReference type="HOGENOM" id="CLU_107907_2_1_4"/>
<dbReference type="OrthoDB" id="9807753at2"/>
<dbReference type="Proteomes" id="UP000000374">
    <property type="component" value="Chromosome"/>
</dbReference>
<dbReference type="GO" id="GO:0005737">
    <property type="term" value="C:cytoplasm"/>
    <property type="evidence" value="ECO:0007669"/>
    <property type="project" value="UniProtKB-UniRule"/>
</dbReference>
<dbReference type="GO" id="GO:0009295">
    <property type="term" value="C:nucleoid"/>
    <property type="evidence" value="ECO:0007669"/>
    <property type="project" value="UniProtKB-SubCell"/>
</dbReference>
<dbReference type="GO" id="GO:0003700">
    <property type="term" value="F:DNA-binding transcription factor activity"/>
    <property type="evidence" value="ECO:0007669"/>
    <property type="project" value="UniProtKB-UniRule"/>
</dbReference>
<dbReference type="GO" id="GO:0000976">
    <property type="term" value="F:transcription cis-regulatory region binding"/>
    <property type="evidence" value="ECO:0007669"/>
    <property type="project" value="TreeGrafter"/>
</dbReference>
<dbReference type="GO" id="GO:2000143">
    <property type="term" value="P:negative regulation of DNA-templated transcription initiation"/>
    <property type="evidence" value="ECO:0007669"/>
    <property type="project" value="TreeGrafter"/>
</dbReference>
<dbReference type="CDD" id="cd16321">
    <property type="entry name" value="MraZ_C"/>
    <property type="match status" value="1"/>
</dbReference>
<dbReference type="CDD" id="cd16320">
    <property type="entry name" value="MraZ_N"/>
    <property type="match status" value="1"/>
</dbReference>
<dbReference type="Gene3D" id="3.40.1550.20">
    <property type="entry name" value="Transcriptional regulator MraZ domain"/>
    <property type="match status" value="1"/>
</dbReference>
<dbReference type="HAMAP" id="MF_01008">
    <property type="entry name" value="MraZ"/>
    <property type="match status" value="1"/>
</dbReference>
<dbReference type="InterPro" id="IPR003444">
    <property type="entry name" value="MraZ"/>
</dbReference>
<dbReference type="InterPro" id="IPR035644">
    <property type="entry name" value="MraZ_C"/>
</dbReference>
<dbReference type="InterPro" id="IPR020603">
    <property type="entry name" value="MraZ_dom"/>
</dbReference>
<dbReference type="InterPro" id="IPR035642">
    <property type="entry name" value="MraZ_N"/>
</dbReference>
<dbReference type="InterPro" id="IPR038619">
    <property type="entry name" value="MraZ_sf"/>
</dbReference>
<dbReference type="InterPro" id="IPR007159">
    <property type="entry name" value="SpoVT-AbrB_dom"/>
</dbReference>
<dbReference type="InterPro" id="IPR037914">
    <property type="entry name" value="SpoVT-AbrB_sf"/>
</dbReference>
<dbReference type="NCBIfam" id="TIGR00242">
    <property type="entry name" value="division/cell wall cluster transcriptional repressor MraZ"/>
    <property type="match status" value="1"/>
</dbReference>
<dbReference type="PANTHER" id="PTHR34701">
    <property type="entry name" value="TRANSCRIPTIONAL REGULATOR MRAZ"/>
    <property type="match status" value="1"/>
</dbReference>
<dbReference type="PANTHER" id="PTHR34701:SF1">
    <property type="entry name" value="TRANSCRIPTIONAL REGULATOR MRAZ"/>
    <property type="match status" value="1"/>
</dbReference>
<dbReference type="Pfam" id="PF02381">
    <property type="entry name" value="MraZ"/>
    <property type="match status" value="2"/>
</dbReference>
<dbReference type="SUPFAM" id="SSF89447">
    <property type="entry name" value="AbrB/MazE/MraZ-like"/>
    <property type="match status" value="1"/>
</dbReference>
<dbReference type="PROSITE" id="PS51740">
    <property type="entry name" value="SPOVT_ABRB"/>
    <property type="match status" value="2"/>
</dbReference>
<sequence>MFQGASSLSLDAKGRLSVPTRHRDVLVATAAGLLTITRHPHGCLMLFPRPEWEKFRERIAELPMSAQWWKRIFLGNAMDVEIDATGRVLISPELRQAAGIAKDTMLLGMGRHFELWDKASYEAQEAQAMQGAMPDVFKDFSF</sequence>
<reference key="1">
    <citation type="submission" date="2006-12" db="EMBL/GenBank/DDBJ databases">
        <title>Complete sequence of chromosome 1 of Verminephrobacter eiseniae EF01-2.</title>
        <authorList>
            <person name="Copeland A."/>
            <person name="Lucas S."/>
            <person name="Lapidus A."/>
            <person name="Barry K."/>
            <person name="Detter J.C."/>
            <person name="Glavina del Rio T."/>
            <person name="Dalin E."/>
            <person name="Tice H."/>
            <person name="Pitluck S."/>
            <person name="Chertkov O."/>
            <person name="Brettin T."/>
            <person name="Bruce D."/>
            <person name="Han C."/>
            <person name="Tapia R."/>
            <person name="Gilna P."/>
            <person name="Schmutz J."/>
            <person name="Larimer F."/>
            <person name="Land M."/>
            <person name="Hauser L."/>
            <person name="Kyrpides N."/>
            <person name="Kim E."/>
            <person name="Stahl D."/>
            <person name="Richardson P."/>
        </authorList>
    </citation>
    <scope>NUCLEOTIDE SEQUENCE [LARGE SCALE GENOMIC DNA]</scope>
    <source>
        <strain>EF01-2</strain>
    </source>
</reference>
<gene>
    <name evidence="1" type="primary">mraZ</name>
    <name type="ordered locus">Veis_4561</name>
</gene>
<organism>
    <name type="scientific">Verminephrobacter eiseniae (strain EF01-2)</name>
    <dbReference type="NCBI Taxonomy" id="391735"/>
    <lineage>
        <taxon>Bacteria</taxon>
        <taxon>Pseudomonadati</taxon>
        <taxon>Pseudomonadota</taxon>
        <taxon>Betaproteobacteria</taxon>
        <taxon>Burkholderiales</taxon>
        <taxon>Comamonadaceae</taxon>
        <taxon>Verminephrobacter</taxon>
    </lineage>
</organism>
<accession>A1WRK2</accession>
<keyword id="KW-0963">Cytoplasm</keyword>
<keyword id="KW-0238">DNA-binding</keyword>
<keyword id="KW-1185">Reference proteome</keyword>
<keyword id="KW-0677">Repeat</keyword>
<keyword id="KW-0804">Transcription</keyword>
<keyword id="KW-0805">Transcription regulation</keyword>
<evidence type="ECO:0000255" key="1">
    <source>
        <dbReference type="HAMAP-Rule" id="MF_01008"/>
    </source>
</evidence>
<evidence type="ECO:0000255" key="2">
    <source>
        <dbReference type="PROSITE-ProRule" id="PRU01076"/>
    </source>
</evidence>
<feature type="chain" id="PRO_1000062947" description="Transcriptional regulator MraZ">
    <location>
        <begin position="1"/>
        <end position="142"/>
    </location>
</feature>
<feature type="domain" description="SpoVT-AbrB 1" evidence="2">
    <location>
        <begin position="5"/>
        <end position="51"/>
    </location>
</feature>
<feature type="domain" description="SpoVT-AbrB 2" evidence="2">
    <location>
        <begin position="77"/>
        <end position="120"/>
    </location>
</feature>
<name>MRAZ_VEREI</name>
<proteinExistence type="inferred from homology"/>
<comment type="subunit">
    <text evidence="1">Forms oligomers.</text>
</comment>
<comment type="subcellular location">
    <subcellularLocation>
        <location evidence="1">Cytoplasm</location>
        <location evidence="1">Nucleoid</location>
    </subcellularLocation>
</comment>
<comment type="similarity">
    <text evidence="1">Belongs to the MraZ family.</text>
</comment>
<protein>
    <recommendedName>
        <fullName>Transcriptional regulator MraZ</fullName>
    </recommendedName>
</protein>